<proteinExistence type="inferred from homology"/>
<accession>A6UFD1</accession>
<sequence length="122" mass="14217">MKAERSDDLKLKALKRGHLAEYRAALCLILKGYRIVAMRYRTRLGEIDIIARRGDLIACVEVKARRSFDDAIFAVSSTAQRRIRAASEVWLSRQGDFHRLSLRYDIVAVMPWRWPRHLTDAF</sequence>
<protein>
    <recommendedName>
        <fullName evidence="1">UPF0102 protein Smed_3545</fullName>
    </recommendedName>
</protein>
<name>Y3545_SINMW</name>
<comment type="similarity">
    <text evidence="1">Belongs to the UPF0102 family.</text>
</comment>
<evidence type="ECO:0000255" key="1">
    <source>
        <dbReference type="HAMAP-Rule" id="MF_00048"/>
    </source>
</evidence>
<feature type="chain" id="PRO_1000009270" description="UPF0102 protein Smed_3545">
    <location>
        <begin position="1"/>
        <end position="122"/>
    </location>
</feature>
<organism>
    <name type="scientific">Sinorhizobium medicae (strain WSM419)</name>
    <name type="common">Ensifer medicae</name>
    <dbReference type="NCBI Taxonomy" id="366394"/>
    <lineage>
        <taxon>Bacteria</taxon>
        <taxon>Pseudomonadati</taxon>
        <taxon>Pseudomonadota</taxon>
        <taxon>Alphaproteobacteria</taxon>
        <taxon>Hyphomicrobiales</taxon>
        <taxon>Rhizobiaceae</taxon>
        <taxon>Sinorhizobium/Ensifer group</taxon>
        <taxon>Sinorhizobium</taxon>
    </lineage>
</organism>
<dbReference type="EMBL" id="CP000738">
    <property type="protein sequence ID" value="ABR62361.1"/>
    <property type="molecule type" value="Genomic_DNA"/>
</dbReference>
<dbReference type="RefSeq" id="WP_012067740.1">
    <property type="nucleotide sequence ID" value="NC_009636.1"/>
</dbReference>
<dbReference type="RefSeq" id="YP_001329196.1">
    <property type="nucleotide sequence ID" value="NC_009636.1"/>
</dbReference>
<dbReference type="SMR" id="A6UFD1"/>
<dbReference type="STRING" id="366394.Smed_3545"/>
<dbReference type="KEGG" id="smd:Smed_3545"/>
<dbReference type="PATRIC" id="fig|366394.8.peg.6798"/>
<dbReference type="eggNOG" id="COG0792">
    <property type="taxonomic scope" value="Bacteria"/>
</dbReference>
<dbReference type="HOGENOM" id="CLU_115353_0_2_5"/>
<dbReference type="OrthoDB" id="9812968at2"/>
<dbReference type="Proteomes" id="UP000001108">
    <property type="component" value="Chromosome"/>
</dbReference>
<dbReference type="GO" id="GO:0003676">
    <property type="term" value="F:nucleic acid binding"/>
    <property type="evidence" value="ECO:0007669"/>
    <property type="project" value="InterPro"/>
</dbReference>
<dbReference type="Gene3D" id="3.40.1350.10">
    <property type="match status" value="1"/>
</dbReference>
<dbReference type="HAMAP" id="MF_00048">
    <property type="entry name" value="UPF0102"/>
    <property type="match status" value="1"/>
</dbReference>
<dbReference type="InterPro" id="IPR011335">
    <property type="entry name" value="Restrct_endonuc-II-like"/>
</dbReference>
<dbReference type="InterPro" id="IPR011856">
    <property type="entry name" value="tRNA_endonuc-like_dom_sf"/>
</dbReference>
<dbReference type="InterPro" id="IPR003509">
    <property type="entry name" value="UPF0102_YraN-like"/>
</dbReference>
<dbReference type="NCBIfam" id="NF009151">
    <property type="entry name" value="PRK12497.1-5"/>
    <property type="match status" value="1"/>
</dbReference>
<dbReference type="PANTHER" id="PTHR34039">
    <property type="entry name" value="UPF0102 PROTEIN YRAN"/>
    <property type="match status" value="1"/>
</dbReference>
<dbReference type="PANTHER" id="PTHR34039:SF1">
    <property type="entry name" value="UPF0102 PROTEIN YRAN"/>
    <property type="match status" value="1"/>
</dbReference>
<dbReference type="Pfam" id="PF02021">
    <property type="entry name" value="UPF0102"/>
    <property type="match status" value="1"/>
</dbReference>
<dbReference type="SUPFAM" id="SSF52980">
    <property type="entry name" value="Restriction endonuclease-like"/>
    <property type="match status" value="1"/>
</dbReference>
<reference key="1">
    <citation type="submission" date="2007-06" db="EMBL/GenBank/DDBJ databases">
        <title>Complete sequence of Sinorhizobium medicae WSM419 chromosome.</title>
        <authorList>
            <consortium name="US DOE Joint Genome Institute"/>
            <person name="Copeland A."/>
            <person name="Lucas S."/>
            <person name="Lapidus A."/>
            <person name="Barry K."/>
            <person name="Glavina del Rio T."/>
            <person name="Dalin E."/>
            <person name="Tice H."/>
            <person name="Pitluck S."/>
            <person name="Chain P."/>
            <person name="Malfatti S."/>
            <person name="Shin M."/>
            <person name="Vergez L."/>
            <person name="Schmutz J."/>
            <person name="Larimer F."/>
            <person name="Land M."/>
            <person name="Hauser L."/>
            <person name="Kyrpides N."/>
            <person name="Mikhailova N."/>
            <person name="Reeve W.G."/>
            <person name="Richardson P."/>
        </authorList>
    </citation>
    <scope>NUCLEOTIDE SEQUENCE [LARGE SCALE GENOMIC DNA]</scope>
    <source>
        <strain>WSM419</strain>
    </source>
</reference>
<gene>
    <name type="ordered locus">Smed_3545</name>
</gene>